<reference key="1">
    <citation type="journal article" date="1996" name="Clin. Exp. Allergy">
        <title>Isolation, cDNA cloning and expression of Lig v 1, the major allergen from privet pollen.</title>
        <authorList>
            <person name="Batanero E."/>
            <person name="Gonzalez de la Pena M."/>
            <person name="Villalba M."/>
            <person name="Monsalve R.I."/>
            <person name="Martin-Esteban M."/>
            <person name="Rodriguez R."/>
        </authorList>
    </citation>
    <scope>NUCLEOTIDE SEQUENCE [MRNA]</scope>
    <scope>PARTIAL PROTEIN SEQUENCE</scope>
    <source>
        <tissue>Pollen</tissue>
    </source>
</reference>
<protein>
    <recommendedName>
        <fullName>Major pollen allergen Lig v 1</fullName>
    </recommendedName>
    <allergenName>Lig v 1</allergenName>
</protein>
<comment type="subcellular location">
    <subcellularLocation>
        <location>Secreted</location>
    </subcellularLocation>
</comment>
<comment type="allergen">
    <text>Causes an allergic reaction in human.</text>
</comment>
<comment type="similarity">
    <text evidence="3">Belongs to the Ole e I family.</text>
</comment>
<proteinExistence type="evidence at protein level"/>
<name>LIGV1_LIGVU</name>
<feature type="chain" id="PRO_0000215114" description="Major pollen allergen Lig v 1">
    <location>
        <begin position="1"/>
        <end position="145"/>
    </location>
</feature>
<feature type="glycosylation site" description="N-linked (GlcNAc...) asparagine" evidence="2">
    <location>
        <position position="111"/>
    </location>
</feature>
<feature type="disulfide bond" evidence="1">
    <location>
        <begin position="19"/>
        <end position="90"/>
    </location>
</feature>
<feature type="disulfide bond" evidence="1">
    <location>
        <begin position="22"/>
        <end position="131"/>
    </location>
</feature>
<feature type="disulfide bond" evidence="1">
    <location>
        <begin position="43"/>
        <end position="78"/>
    </location>
</feature>
<feature type="sequence variant" description="In Lig v 1.0102.">
    <original>V</original>
    <variation>I</variation>
    <location>
        <position position="51"/>
    </location>
</feature>
<feature type="sequence variant" description="In Lig v 1.0102.">
    <original>K</original>
    <variation>R</variation>
    <location>
        <position position="60"/>
    </location>
</feature>
<feature type="sequence variant" description="In Lig v 1.0102.">
    <original>N</original>
    <variation>S</variation>
    <location>
        <position position="66"/>
    </location>
</feature>
<feature type="sequence variant" description="In Lig v 1.0102.">
    <original>I</original>
    <variation>L</variation>
    <location>
        <position position="83"/>
    </location>
</feature>
<feature type="sequence variant" description="In Lig v 1.0102.">
    <original>T</original>
    <variation>I</variation>
    <location>
        <position position="95"/>
    </location>
</feature>
<feature type="sequence variant" description="In Lig v 1.0102.">
    <original>V</original>
    <variation>M</variation>
    <location>
        <position position="106"/>
    </location>
</feature>
<feature type="sequence variant" description="In Lig v 1.0102.">
    <original>L</original>
    <variation>F</variation>
    <location>
        <position position="123"/>
    </location>
</feature>
<feature type="sequence variant" description="In Lig v 1.0102.">
    <original>V</original>
    <variation>A</variation>
    <location>
        <position position="127"/>
    </location>
</feature>
<feature type="strand" evidence="4">
    <location>
        <begin position="11"/>
        <end position="20"/>
    </location>
</feature>
<feature type="strand" evidence="4">
    <location>
        <begin position="38"/>
        <end position="49"/>
    </location>
</feature>
<feature type="strand" evidence="4">
    <location>
        <begin position="51"/>
        <end position="59"/>
    </location>
</feature>
<feature type="helix" evidence="4">
    <location>
        <begin position="61"/>
        <end position="63"/>
    </location>
</feature>
<feature type="strand" evidence="4">
    <location>
        <begin position="64"/>
        <end position="69"/>
    </location>
</feature>
<feature type="strand" evidence="4">
    <location>
        <begin position="74"/>
        <end position="84"/>
    </location>
</feature>
<feature type="strand" evidence="4">
    <location>
        <begin position="103"/>
        <end position="108"/>
    </location>
</feature>
<feature type="strand" evidence="4">
    <location>
        <begin position="114"/>
        <end position="116"/>
    </location>
</feature>
<feature type="strand" evidence="4">
    <location>
        <begin position="120"/>
        <end position="123"/>
    </location>
</feature>
<feature type="helix" evidence="4">
    <location>
        <begin position="131"/>
        <end position="137"/>
    </location>
</feature>
<sequence length="145" mass="16400">EDVPQPPVSQFYIQGQVYCDTCRARFITELSEFIPGAGVRLQCKDGENGKVTFTEVGYTKAEGLYNMLIERDHKNEFCEITLISSSRKDCDEIPTEGWVKPSLKFVLNTVNGTTRTINPLGFLKKEVLPKCPQVFNKLGMYPPNM</sequence>
<dbReference type="EMBL" id="X77787">
    <property type="protein sequence ID" value="CAA54818.1"/>
    <property type="molecule type" value="mRNA"/>
</dbReference>
<dbReference type="EMBL" id="X77788">
    <property type="protein sequence ID" value="CAA54819.1"/>
    <property type="molecule type" value="mRNA"/>
</dbReference>
<dbReference type="PDB" id="6YOA">
    <property type="method" value="X-ray"/>
    <property type="resolution" value="2.83 A"/>
    <property type="chains" value="A/B=1-145"/>
</dbReference>
<dbReference type="PDBsum" id="6YOA"/>
<dbReference type="SMR" id="O82015"/>
<dbReference type="Allergome" id="446">
    <property type="allergen name" value="Lig v 1"/>
</dbReference>
<dbReference type="Allergome" id="447">
    <property type="allergen name" value="Lig v 1.0101"/>
</dbReference>
<dbReference type="Allergome" id="448">
    <property type="allergen name" value="Lig v 1.0102"/>
</dbReference>
<dbReference type="GO" id="GO:0005615">
    <property type="term" value="C:extracellular space"/>
    <property type="evidence" value="ECO:0007669"/>
    <property type="project" value="InterPro"/>
</dbReference>
<dbReference type="InterPro" id="IPR006040">
    <property type="entry name" value="Allergen_Ole_e_I_CS"/>
</dbReference>
<dbReference type="InterPro" id="IPR006041">
    <property type="entry name" value="Pollen_Ole_e1_allergen"/>
</dbReference>
<dbReference type="PANTHER" id="PTHR31614:SF24">
    <property type="entry name" value="OLEE1-LIKE PROTEIN"/>
    <property type="match status" value="1"/>
</dbReference>
<dbReference type="PANTHER" id="PTHR31614">
    <property type="entry name" value="PROTEIN DOWNSTREAM OF FLC-RELATED"/>
    <property type="match status" value="1"/>
</dbReference>
<dbReference type="Pfam" id="PF01190">
    <property type="entry name" value="Pollen_Ole_e_1"/>
    <property type="match status" value="1"/>
</dbReference>
<dbReference type="PROSITE" id="PS00925">
    <property type="entry name" value="OLEEI"/>
    <property type="match status" value="1"/>
</dbReference>
<evidence type="ECO:0000250" key="1"/>
<evidence type="ECO:0000255" key="2"/>
<evidence type="ECO:0000305" key="3"/>
<evidence type="ECO:0007829" key="4">
    <source>
        <dbReference type="PDB" id="6YOA"/>
    </source>
</evidence>
<keyword id="KW-0002">3D-structure</keyword>
<keyword id="KW-0020">Allergen</keyword>
<keyword id="KW-0903">Direct protein sequencing</keyword>
<keyword id="KW-1015">Disulfide bond</keyword>
<keyword id="KW-0325">Glycoprotein</keyword>
<keyword id="KW-0964">Secreted</keyword>
<accession>O82015</accession>
<accession>O82016</accession>
<organism>
    <name type="scientific">Ligustrum vulgare</name>
    <name type="common">Common privet</name>
    <name type="synonym">Ligustrum insulare</name>
    <dbReference type="NCBI Taxonomy" id="13597"/>
    <lineage>
        <taxon>Eukaryota</taxon>
        <taxon>Viridiplantae</taxon>
        <taxon>Streptophyta</taxon>
        <taxon>Embryophyta</taxon>
        <taxon>Tracheophyta</taxon>
        <taxon>Spermatophyta</taxon>
        <taxon>Magnoliopsida</taxon>
        <taxon>eudicotyledons</taxon>
        <taxon>Gunneridae</taxon>
        <taxon>Pentapetalae</taxon>
        <taxon>asterids</taxon>
        <taxon>lamiids</taxon>
        <taxon>Lamiales</taxon>
        <taxon>Oleaceae</taxon>
        <taxon>Oleeae</taxon>
        <taxon>Ligustrum</taxon>
    </lineage>
</organism>